<feature type="chain" id="PRO_0000360741" description="SPbeta prophage-derived uncharacterized protein YoqF">
    <location>
        <begin position="1"/>
        <end position="67"/>
    </location>
</feature>
<gene>
    <name type="primary">yoqF</name>
    <name type="ordered locus">BSU20650</name>
</gene>
<reference key="1">
    <citation type="journal article" date="1997" name="Nature">
        <title>The complete genome sequence of the Gram-positive bacterium Bacillus subtilis.</title>
        <authorList>
            <person name="Kunst F."/>
            <person name="Ogasawara N."/>
            <person name="Moszer I."/>
            <person name="Albertini A.M."/>
            <person name="Alloni G."/>
            <person name="Azevedo V."/>
            <person name="Bertero M.G."/>
            <person name="Bessieres P."/>
            <person name="Bolotin A."/>
            <person name="Borchert S."/>
            <person name="Borriss R."/>
            <person name="Boursier L."/>
            <person name="Brans A."/>
            <person name="Braun M."/>
            <person name="Brignell S.C."/>
            <person name="Bron S."/>
            <person name="Brouillet S."/>
            <person name="Bruschi C.V."/>
            <person name="Caldwell B."/>
            <person name="Capuano V."/>
            <person name="Carter N.M."/>
            <person name="Choi S.-K."/>
            <person name="Codani J.-J."/>
            <person name="Connerton I.F."/>
            <person name="Cummings N.J."/>
            <person name="Daniel R.A."/>
            <person name="Denizot F."/>
            <person name="Devine K.M."/>
            <person name="Duesterhoeft A."/>
            <person name="Ehrlich S.D."/>
            <person name="Emmerson P.T."/>
            <person name="Entian K.-D."/>
            <person name="Errington J."/>
            <person name="Fabret C."/>
            <person name="Ferrari E."/>
            <person name="Foulger D."/>
            <person name="Fritz C."/>
            <person name="Fujita M."/>
            <person name="Fujita Y."/>
            <person name="Fuma S."/>
            <person name="Galizzi A."/>
            <person name="Galleron N."/>
            <person name="Ghim S.-Y."/>
            <person name="Glaser P."/>
            <person name="Goffeau A."/>
            <person name="Golightly E.J."/>
            <person name="Grandi G."/>
            <person name="Guiseppi G."/>
            <person name="Guy B.J."/>
            <person name="Haga K."/>
            <person name="Haiech J."/>
            <person name="Harwood C.R."/>
            <person name="Henaut A."/>
            <person name="Hilbert H."/>
            <person name="Holsappel S."/>
            <person name="Hosono S."/>
            <person name="Hullo M.-F."/>
            <person name="Itaya M."/>
            <person name="Jones L.-M."/>
            <person name="Joris B."/>
            <person name="Karamata D."/>
            <person name="Kasahara Y."/>
            <person name="Klaerr-Blanchard M."/>
            <person name="Klein C."/>
            <person name="Kobayashi Y."/>
            <person name="Koetter P."/>
            <person name="Koningstein G."/>
            <person name="Krogh S."/>
            <person name="Kumano M."/>
            <person name="Kurita K."/>
            <person name="Lapidus A."/>
            <person name="Lardinois S."/>
            <person name="Lauber J."/>
            <person name="Lazarevic V."/>
            <person name="Lee S.-M."/>
            <person name="Levine A."/>
            <person name="Liu H."/>
            <person name="Masuda S."/>
            <person name="Mauel C."/>
            <person name="Medigue C."/>
            <person name="Medina N."/>
            <person name="Mellado R.P."/>
            <person name="Mizuno M."/>
            <person name="Moestl D."/>
            <person name="Nakai S."/>
            <person name="Noback M."/>
            <person name="Noone D."/>
            <person name="O'Reilly M."/>
            <person name="Ogawa K."/>
            <person name="Ogiwara A."/>
            <person name="Oudega B."/>
            <person name="Park S.-H."/>
            <person name="Parro V."/>
            <person name="Pohl T.M."/>
            <person name="Portetelle D."/>
            <person name="Porwollik S."/>
            <person name="Prescott A.M."/>
            <person name="Presecan E."/>
            <person name="Pujic P."/>
            <person name="Purnelle B."/>
            <person name="Rapoport G."/>
            <person name="Rey M."/>
            <person name="Reynolds S."/>
            <person name="Rieger M."/>
            <person name="Rivolta C."/>
            <person name="Rocha E."/>
            <person name="Roche B."/>
            <person name="Rose M."/>
            <person name="Sadaie Y."/>
            <person name="Sato T."/>
            <person name="Scanlan E."/>
            <person name="Schleich S."/>
            <person name="Schroeter R."/>
            <person name="Scoffone F."/>
            <person name="Sekiguchi J."/>
            <person name="Sekowska A."/>
            <person name="Seror S.J."/>
            <person name="Serror P."/>
            <person name="Shin B.-S."/>
            <person name="Soldo B."/>
            <person name="Sorokin A."/>
            <person name="Tacconi E."/>
            <person name="Takagi T."/>
            <person name="Takahashi H."/>
            <person name="Takemaru K."/>
            <person name="Takeuchi M."/>
            <person name="Tamakoshi A."/>
            <person name="Tanaka T."/>
            <person name="Terpstra P."/>
            <person name="Tognoni A."/>
            <person name="Tosato V."/>
            <person name="Uchiyama S."/>
            <person name="Vandenbol M."/>
            <person name="Vannier F."/>
            <person name="Vassarotti A."/>
            <person name="Viari A."/>
            <person name="Wambutt R."/>
            <person name="Wedler E."/>
            <person name="Wedler H."/>
            <person name="Weitzenegger T."/>
            <person name="Winters P."/>
            <person name="Wipat A."/>
            <person name="Yamamoto H."/>
            <person name="Yamane K."/>
            <person name="Yasumoto K."/>
            <person name="Yata K."/>
            <person name="Yoshida K."/>
            <person name="Yoshikawa H.-F."/>
            <person name="Zumstein E."/>
            <person name="Yoshikawa H."/>
            <person name="Danchin A."/>
        </authorList>
    </citation>
    <scope>NUCLEOTIDE SEQUENCE [LARGE SCALE GENOMIC DNA]</scope>
    <source>
        <strain>168</strain>
    </source>
</reference>
<proteinExistence type="predicted"/>
<organism>
    <name type="scientific">Bacillus subtilis (strain 168)</name>
    <dbReference type="NCBI Taxonomy" id="224308"/>
    <lineage>
        <taxon>Bacteria</taxon>
        <taxon>Bacillati</taxon>
        <taxon>Bacillota</taxon>
        <taxon>Bacilli</taxon>
        <taxon>Bacillales</taxon>
        <taxon>Bacillaceae</taxon>
        <taxon>Bacillus</taxon>
    </lineage>
</organism>
<dbReference type="EMBL" id="AL009126">
    <property type="protein sequence ID" value="CAB13957.1"/>
    <property type="molecule type" value="Genomic_DNA"/>
</dbReference>
<dbReference type="RefSeq" id="NP_389947.1">
    <property type="nucleotide sequence ID" value="NC_000964.3"/>
</dbReference>
<dbReference type="RefSeq" id="WP_009967498.1">
    <property type="nucleotide sequence ID" value="NZ_OZ025638.1"/>
</dbReference>
<dbReference type="FunCoup" id="O34584">
    <property type="interactions" value="94"/>
</dbReference>
<dbReference type="STRING" id="224308.BSU20650"/>
<dbReference type="PaxDb" id="224308-BSU20650"/>
<dbReference type="EnsemblBacteria" id="CAB13957">
    <property type="protein sequence ID" value="CAB13957"/>
    <property type="gene ID" value="BSU_20650"/>
</dbReference>
<dbReference type="GeneID" id="936493"/>
<dbReference type="KEGG" id="bsu:BSU20650"/>
<dbReference type="PATRIC" id="fig|224308.179.peg.2255"/>
<dbReference type="InParanoid" id="O34584"/>
<dbReference type="OrthoDB" id="2889685at2"/>
<dbReference type="BioCyc" id="BSUB:BSU20650-MONOMER"/>
<dbReference type="Proteomes" id="UP000001570">
    <property type="component" value="Chromosome"/>
</dbReference>
<sequence length="67" mass="8201">MKFAPMDKVKFKTASHLNKLRTLKKRVPELDDPLLGECWEFEEDGLRQFDWEENYEFVARPKHFNWD</sequence>
<protein>
    <recommendedName>
        <fullName>SPbeta prophage-derived uncharacterized protein YoqF</fullName>
    </recommendedName>
</protein>
<accession>O34584</accession>
<name>YOQF_BACSU</name>
<keyword id="KW-1185">Reference proteome</keyword>